<reference key="1">
    <citation type="journal article" date="2014" name="Nature">
        <title>ABCB5 is a limbal stem cell gene required for corneal development and repair.</title>
        <authorList>
            <person name="Ksander B.R."/>
            <person name="Kolovou P.E."/>
            <person name="Wilson B.J."/>
            <person name="Saab K.R."/>
            <person name="Guo Q."/>
            <person name="Ma J."/>
            <person name="McGuire S.P."/>
            <person name="Gregory M.S."/>
            <person name="Vincent W.J."/>
            <person name="Perez V.L."/>
            <person name="Cruz-Guilloty F."/>
            <person name="Kao W.W."/>
            <person name="Call M.K."/>
            <person name="Tucker B.A."/>
            <person name="Zhan Q."/>
            <person name="Murphy G.F."/>
            <person name="Lathrop K.L."/>
            <person name="Alt C."/>
            <person name="Mortensen L.J."/>
            <person name="Lin C.P."/>
            <person name="Zieske J.D."/>
            <person name="Frank M.H."/>
            <person name="Frank N.Y."/>
        </authorList>
    </citation>
    <scope>NUCLEOTIDE SEQUENCE [MRNA] (ISOFORMS 1 AND 2)</scope>
    <scope>FUNCTION</scope>
    <scope>DISRUPTION PHENOTYPE</scope>
    <scope>TISSUE SPECIFICITY</scope>
    <scope>SUBCELLULAR LOCATION</scope>
    <source>
        <strain>BALB/cJ</strain>
        <tissue>Testis</tissue>
    </source>
</reference>
<reference key="2">
    <citation type="journal article" date="2009" name="PLoS Biol.">
        <title>Lineage-specific biology revealed by a finished genome assembly of the mouse.</title>
        <authorList>
            <person name="Church D.M."/>
            <person name="Goodstadt L."/>
            <person name="Hillier L.W."/>
            <person name="Zody M.C."/>
            <person name="Goldstein S."/>
            <person name="She X."/>
            <person name="Bult C.J."/>
            <person name="Agarwala R."/>
            <person name="Cherry J.L."/>
            <person name="DiCuccio M."/>
            <person name="Hlavina W."/>
            <person name="Kapustin Y."/>
            <person name="Meric P."/>
            <person name="Maglott D."/>
            <person name="Birtle Z."/>
            <person name="Marques A.C."/>
            <person name="Graves T."/>
            <person name="Zhou S."/>
            <person name="Teague B."/>
            <person name="Potamousis K."/>
            <person name="Churas C."/>
            <person name="Place M."/>
            <person name="Herschleb J."/>
            <person name="Runnheim R."/>
            <person name="Forrest D."/>
            <person name="Amos-Landgraf J."/>
            <person name="Schwartz D.C."/>
            <person name="Cheng Z."/>
            <person name="Lindblad-Toh K."/>
            <person name="Eichler E.E."/>
            <person name="Ponting C.P."/>
        </authorList>
    </citation>
    <scope>NUCLEOTIDE SEQUENCE [LARGE SCALE GENOMIC DNA]</scope>
    <source>
        <strain>C57BL/6J</strain>
    </source>
</reference>
<organism>
    <name type="scientific">Mus musculus</name>
    <name type="common">Mouse</name>
    <dbReference type="NCBI Taxonomy" id="10090"/>
    <lineage>
        <taxon>Eukaryota</taxon>
        <taxon>Metazoa</taxon>
        <taxon>Chordata</taxon>
        <taxon>Craniata</taxon>
        <taxon>Vertebrata</taxon>
        <taxon>Euteleostomi</taxon>
        <taxon>Mammalia</taxon>
        <taxon>Eutheria</taxon>
        <taxon>Euarchontoglires</taxon>
        <taxon>Glires</taxon>
        <taxon>Rodentia</taxon>
        <taxon>Myomorpha</taxon>
        <taxon>Muroidea</taxon>
        <taxon>Muridae</taxon>
        <taxon>Murinae</taxon>
        <taxon>Mus</taxon>
        <taxon>Mus</taxon>
    </lineage>
</organism>
<gene>
    <name evidence="8" type="primary">Abcb5</name>
</gene>
<sequence>MANSERTNGLQETNQRYGPLQEQVPKVGNQAVGPIEIFRFADNLDIVLMTLGILASMINGATVPLMSLVLGEISDHLINGCLVQTNRTKYQNCSQTQEKLNEDIIVLTLYYIGIGAAALIFGYVQISFWVITAARQTTRIRKQFFHSILAQDISWFDGSDICELNTRMTGDINKLCDGIGDKIPLMFQNISGFSIGLVISLIKSWKLSLVVLSTSPLIMASSALCSRMIISLTSKELDAYSKAGAVAEEALSSIQTVTAFGAQEKEIQRYTQHLKDAKDAGIKRATASKLSLGAVYFFMNGAYGLAFWYGTSLIFGGEPGYTIGTILAVFFSVIHSSYCIGSVAPHLETFTVARGAAFNIFQVIDKKPNIDNFSTAGFVPECIEGNIEFKNVSFSYPSRPSAKVLKGLNLKIKAGETVALVGPSGSGKSTTVQLLQRLYDPEDGCITVDENDIRAQNVRHYREQIGVVRQEPVLFGTTIGNNIKFGREGVGEKEMEQAAREANAYDFIMAFPKKFNTLVGEKGAQMSGGQKQRIAIARALVRNPKILILDEATSALDTESESLVQTALEKASKGRTTIVVAHRLSTIRGADLIVTMKDGMVVEKGTHAELMAKQGLYYSLAMAQDIKKVDEQMESRTCSTAGNASYGSLCDVNSAKAPCTDQLEEAVHHQKTSLPEVSLLKIFKLSKSEWPFVVLGTLASALNGSVHPVFSIIFGKLVTMFEDKNKATLKQDAELYSMMLVVLGIVALVTYLMQGLFYGRAEENLAMRLRHSAFKAMLYQDMAWYDDKENNTGALTTTLAVDVAQIQGAATSRLGIVTQDVSNMSLSILISFIYGWEMTLLILSFAPVLAVTGMIQTAAMAGFANRDKQALKRAGKIATEAVENIRTVVSLTRERAFEQMYEETLQTQHRNALKRAHITGCCYAVSHAFVHFAHAAGFRFGAYLIQAGRMMPEGMFIVFTAIAYGAMAIGETLVWAPEYSKAKAGASHLFALLKNKPTINSCSQSGEKPDTCEGNLEFREVSFVYPCRPEVPVLQNMSLSIEKGKTVAFVGSSGCGKSTCVQLLQRFYDPMKGQVLLDGVDVKELNVQWLRSQTAIVSQEPVLFNCSIAENIAYGDNSRMVPLEEIKEVADAANIHSFIEGLPRKYNTLVGLRGVQLSGGQKQRLAIARALLRKPKILLLDEATSALDNESEKVVQQALDKARRGKTCLVVAHRLSTIQNADMIVVLQNGSIKEQGTHQELLRNGDTYFKLVAAH</sequence>
<name>ABCB5_MOUSE</name>
<evidence type="ECO:0000250" key="1">
    <source>
        <dbReference type="UniProtKB" id="Q2M3G0"/>
    </source>
</evidence>
<evidence type="ECO:0000255" key="2"/>
<evidence type="ECO:0000255" key="3">
    <source>
        <dbReference type="PROSITE-ProRule" id="PRU00434"/>
    </source>
</evidence>
<evidence type="ECO:0000255" key="4">
    <source>
        <dbReference type="PROSITE-ProRule" id="PRU00441"/>
    </source>
</evidence>
<evidence type="ECO:0000269" key="5">
    <source>
    </source>
</evidence>
<evidence type="ECO:0000303" key="6">
    <source>
    </source>
</evidence>
<evidence type="ECO:0000305" key="7"/>
<evidence type="ECO:0000312" key="8">
    <source>
        <dbReference type="MGI" id="MGI:1924956"/>
    </source>
</evidence>
<accession>B5X0E4</accession>
<accession>W5QLL5</accession>
<feature type="chain" id="PRO_0000430433" description="ATP-binding cassette sub-family B member 5">
    <location>
        <begin position="1"/>
        <end position="1255"/>
    </location>
</feature>
<feature type="transmembrane region" description="Helical" evidence="4">
    <location>
        <begin position="46"/>
        <end position="66"/>
    </location>
</feature>
<feature type="transmembrane region" description="Helical" evidence="4">
    <location>
        <begin position="104"/>
        <end position="124"/>
    </location>
</feature>
<feature type="transmembrane region" description="Helical" evidence="4">
    <location>
        <begin position="290"/>
        <end position="310"/>
    </location>
</feature>
<feature type="transmembrane region" description="Helical" evidence="4">
    <location>
        <begin position="314"/>
        <end position="334"/>
    </location>
</feature>
<feature type="transmembrane region" description="Helical" evidence="4">
    <location>
        <begin position="694"/>
        <end position="714"/>
    </location>
</feature>
<feature type="transmembrane region" description="Helical" evidence="4">
    <location>
        <begin position="738"/>
        <end position="758"/>
    </location>
</feature>
<feature type="transmembrane region" description="Helical" evidence="4">
    <location>
        <begin position="814"/>
        <end position="836"/>
    </location>
</feature>
<feature type="transmembrane region" description="Helical" evidence="4">
    <location>
        <begin position="841"/>
        <end position="863"/>
    </location>
</feature>
<feature type="transmembrane region" description="Helical" evidence="4">
    <location>
        <begin position="955"/>
        <end position="975"/>
    </location>
</feature>
<feature type="domain" description="ABC transmembrane type-1 1" evidence="4">
    <location>
        <begin position="51"/>
        <end position="351"/>
    </location>
</feature>
<feature type="domain" description="ABC transporter 1" evidence="3">
    <location>
        <begin position="387"/>
        <end position="623"/>
    </location>
</feature>
<feature type="domain" description="ABC transmembrane type-1 2" evidence="4">
    <location>
        <begin position="694"/>
        <end position="981"/>
    </location>
</feature>
<feature type="domain" description="ABC transporter 2" evidence="3">
    <location>
        <begin position="1016"/>
        <end position="1254"/>
    </location>
</feature>
<feature type="binding site" evidence="3">
    <location>
        <begin position="422"/>
        <end position="429"/>
    </location>
    <ligand>
        <name>ATP</name>
        <dbReference type="ChEBI" id="CHEBI:30616"/>
    </ligand>
</feature>
<feature type="binding site" evidence="3">
    <location>
        <begin position="1051"/>
        <end position="1058"/>
    </location>
    <ligand>
        <name>ATP</name>
        <dbReference type="ChEBI" id="CHEBI:30616"/>
    </ligand>
</feature>
<feature type="glycosylation site" description="N-linked (GlcNAc...) asparagine" evidence="2">
    <location>
        <position position="86"/>
    </location>
</feature>
<feature type="glycosylation site" description="N-linked (GlcNAc...) asparagine" evidence="2">
    <location>
        <position position="92"/>
    </location>
</feature>
<feature type="glycosylation site" description="N-linked (GlcNAc...) asparagine" evidence="2">
    <location>
        <position position="189"/>
    </location>
</feature>
<feature type="glycosylation site" description="N-linked (GlcNAc...) asparagine" evidence="2">
    <location>
        <position position="372"/>
    </location>
</feature>
<feature type="glycosylation site" description="N-linked (GlcNAc...) asparagine" evidence="2">
    <location>
        <position position="391"/>
    </location>
</feature>
<feature type="glycosylation site" description="N-linked (GlcNAc...) asparagine" evidence="2">
    <location>
        <position position="643"/>
    </location>
</feature>
<feature type="glycosylation site" description="N-linked (GlcNAc...) asparagine" evidence="2">
    <location>
        <position position="790"/>
    </location>
</feature>
<feature type="glycosylation site" description="N-linked (GlcNAc...) asparagine" evidence="2">
    <location>
        <position position="1036"/>
    </location>
</feature>
<feature type="glycosylation site" description="N-linked (GlcNAc...) asparagine" evidence="2">
    <location>
        <position position="1105"/>
    </location>
</feature>
<feature type="glycosylation site" description="N-linked (GlcNAc...) asparagine" evidence="2">
    <location>
        <position position="1189"/>
    </location>
</feature>
<feature type="glycosylation site" description="N-linked (GlcNAc...) asparagine" evidence="2">
    <location>
        <position position="1229"/>
    </location>
</feature>
<feature type="splice variant" id="VSP_056757" description="In isoform 2." evidence="6">
    <location>
        <begin position="1"/>
        <end position="525"/>
    </location>
</feature>
<feature type="sequence conflict" description="In Ref. 1; AFS60113." evidence="7" ref="1">
    <original>V</original>
    <variation>I</variation>
    <location>
        <position position="564"/>
    </location>
</feature>
<keyword id="KW-0025">Alternative splicing</keyword>
<keyword id="KW-0067">ATP-binding</keyword>
<keyword id="KW-1003">Cell membrane</keyword>
<keyword id="KW-0221">Differentiation</keyword>
<keyword id="KW-0325">Glycoprotein</keyword>
<keyword id="KW-0472">Membrane</keyword>
<keyword id="KW-0547">Nucleotide-binding</keyword>
<keyword id="KW-1185">Reference proteome</keyword>
<keyword id="KW-0677">Repeat</keyword>
<keyword id="KW-1278">Translocase</keyword>
<keyword id="KW-0812">Transmembrane</keyword>
<keyword id="KW-1133">Transmembrane helix</keyword>
<keyword id="KW-0813">Transport</keyword>
<comment type="function">
    <text evidence="1 5">Energy-dependent efflux transporter responsible for decreased drug accumulation in multidrug-resistant cells (By similarity). Specifically present in limbal stem cells, where it plays a key role in corneal development and repair (PubMed:25030174).</text>
</comment>
<comment type="catalytic activity">
    <reaction evidence="1">
        <text>daunorubicin(in) + ATP + H2O = daunorubicin(out) + ADP + phosphate + H(+)</text>
        <dbReference type="Rhea" id="RHEA:33147"/>
        <dbReference type="ChEBI" id="CHEBI:15377"/>
        <dbReference type="ChEBI" id="CHEBI:15378"/>
        <dbReference type="ChEBI" id="CHEBI:30616"/>
        <dbReference type="ChEBI" id="CHEBI:43474"/>
        <dbReference type="ChEBI" id="CHEBI:64677"/>
        <dbReference type="ChEBI" id="CHEBI:456216"/>
        <dbReference type="EC" id="7.6.2.2"/>
    </reaction>
    <physiologicalReaction direction="left-to-right" evidence="1">
        <dbReference type="Rhea" id="RHEA:33148"/>
    </physiologicalReaction>
</comment>
<comment type="subcellular location">
    <subcellularLocation>
        <location evidence="5">Cell membrane</location>
        <topology evidence="4 5">Multi-pass membrane protein</topology>
    </subcellularLocation>
</comment>
<comment type="alternative products">
    <event type="alternative splicing"/>
    <isoform>
        <id>B5X0E4-1</id>
        <name>1</name>
        <sequence type="displayed"/>
    </isoform>
    <isoform>
        <id>B5X0E4-2</id>
        <name>2</name>
        <sequence type="described" ref="VSP_056757"/>
    </isoform>
</comment>
<comment type="tissue specificity">
    <text evidence="5">In developing eye, expressed in basal limbal epithelium but not in central cornea. Acts as a marker of limbal stem cells.</text>
</comment>
<comment type="disruption phenotype">
    <text evidence="5">Defects in corneal development. While eyes contain all anterior and posterior segment components, corneas show developmental abnormalities characterized by decreased cellularity of the apical epithelial layer and disorganized basal and wing cell layers. Defects are due to depletion of quiescent limbal stem cells, leading to enhanced proliferation and apoptosis, and resulting in defective corneal differentiation and wound healing.</text>
</comment>
<comment type="similarity">
    <text evidence="7">Belongs to the ABC transporter superfamily. ABCB family. Multidrug resistance exporter (TC 3.A.1.201) subfamily.</text>
</comment>
<protein>
    <recommendedName>
        <fullName evidence="7">ATP-binding cassette sub-family B member 5</fullName>
    </recommendedName>
    <alternativeName>
        <fullName>ABCB5 P-gp</fullName>
    </alternativeName>
    <alternativeName>
        <fullName>P-glycoprotein ABCB5</fullName>
        <ecNumber evidence="1">7.6.2.2</ecNumber>
    </alternativeName>
</protein>
<dbReference type="EC" id="7.6.2.2" evidence="1"/>
<dbReference type="EMBL" id="AY766239">
    <property type="protein sequence ID" value="AAX11686.1"/>
    <property type="molecule type" value="mRNA"/>
</dbReference>
<dbReference type="EMBL" id="JQ655148">
    <property type="protein sequence ID" value="AFS60113.1"/>
    <property type="molecule type" value="mRNA"/>
</dbReference>
<dbReference type="EMBL" id="AC126277">
    <property type="status" value="NOT_ANNOTATED_CDS"/>
    <property type="molecule type" value="Genomic_DNA"/>
</dbReference>
<dbReference type="EMBL" id="AC131717">
    <property type="status" value="NOT_ANNOTATED_CDS"/>
    <property type="molecule type" value="Genomic_DNA"/>
</dbReference>
<dbReference type="CCDS" id="CCDS49198.1">
    <molecule id="B5X0E4-1"/>
</dbReference>
<dbReference type="RefSeq" id="NP_084237.1">
    <molecule id="B5X0E4-1"/>
    <property type="nucleotide sequence ID" value="NM_029961.2"/>
</dbReference>
<dbReference type="SMR" id="B5X0E4"/>
<dbReference type="BioGRID" id="218862">
    <property type="interactions" value="2"/>
</dbReference>
<dbReference type="FunCoup" id="B5X0E4">
    <property type="interactions" value="236"/>
</dbReference>
<dbReference type="IntAct" id="B5X0E4">
    <property type="interactions" value="1"/>
</dbReference>
<dbReference type="STRING" id="10090.ENSMUSP00000046177"/>
<dbReference type="GlyCosmos" id="B5X0E4">
    <property type="glycosylation" value="11 sites, No reported glycans"/>
</dbReference>
<dbReference type="GlyGen" id="B5X0E4">
    <property type="glycosylation" value="11 sites"/>
</dbReference>
<dbReference type="iPTMnet" id="B5X0E4"/>
<dbReference type="PhosphoSitePlus" id="B5X0E4"/>
<dbReference type="jPOST" id="B5X0E4"/>
<dbReference type="PaxDb" id="10090-ENSMUSP00000046177"/>
<dbReference type="ProteomicsDB" id="286045">
    <molecule id="B5X0E4-1"/>
</dbReference>
<dbReference type="ProteomicsDB" id="286046">
    <molecule id="B5X0E4-2"/>
</dbReference>
<dbReference type="Antibodypedia" id="11940">
    <property type="antibodies" value="408 antibodies from 38 providers"/>
</dbReference>
<dbReference type="Ensembl" id="ENSMUST00000035515.5">
    <molecule id="B5X0E4-1"/>
    <property type="protein sequence ID" value="ENSMUSP00000046177.5"/>
    <property type="gene ID" value="ENSMUSG00000072791.12"/>
</dbReference>
<dbReference type="GeneID" id="77706"/>
<dbReference type="KEGG" id="mmu:77706"/>
<dbReference type="UCSC" id="uc007pij.2">
    <molecule id="B5X0E4-1"/>
    <property type="organism name" value="mouse"/>
</dbReference>
<dbReference type="AGR" id="MGI:1924956"/>
<dbReference type="CTD" id="340273"/>
<dbReference type="MGI" id="MGI:1924956">
    <property type="gene designation" value="Abcb5"/>
</dbReference>
<dbReference type="VEuPathDB" id="HostDB:ENSMUSG00000072791"/>
<dbReference type="eggNOG" id="KOG0055">
    <property type="taxonomic scope" value="Eukaryota"/>
</dbReference>
<dbReference type="GeneTree" id="ENSGT00940000161340"/>
<dbReference type="HOGENOM" id="CLU_000604_17_2_1"/>
<dbReference type="InParanoid" id="B5X0E4"/>
<dbReference type="OMA" id="WAFQSWV"/>
<dbReference type="OrthoDB" id="6500128at2759"/>
<dbReference type="PhylomeDB" id="B5X0E4"/>
<dbReference type="TreeFam" id="TF105193"/>
<dbReference type="Reactome" id="R-MMU-382556">
    <property type="pathway name" value="ABC-family proteins mediated transport"/>
</dbReference>
<dbReference type="BioGRID-ORCS" id="77706">
    <property type="hits" value="2 hits in 77 CRISPR screens"/>
</dbReference>
<dbReference type="PRO" id="PR:B5X0E4"/>
<dbReference type="Proteomes" id="UP000000589">
    <property type="component" value="Chromosome 12"/>
</dbReference>
<dbReference type="RNAct" id="B5X0E4">
    <property type="molecule type" value="protein"/>
</dbReference>
<dbReference type="Bgee" id="ENSMUSG00000072791">
    <property type="expression patterns" value="Expressed in blastoderm cell in morula and 9 other cell types or tissues"/>
</dbReference>
<dbReference type="GO" id="GO:0005886">
    <property type="term" value="C:plasma membrane"/>
    <property type="evidence" value="ECO:0000314"/>
    <property type="project" value="UniProtKB"/>
</dbReference>
<dbReference type="GO" id="GO:0008559">
    <property type="term" value="F:ABC-type xenobiotic transporter activity"/>
    <property type="evidence" value="ECO:0007669"/>
    <property type="project" value="UniProtKB-EC"/>
</dbReference>
<dbReference type="GO" id="GO:0005524">
    <property type="term" value="F:ATP binding"/>
    <property type="evidence" value="ECO:0007669"/>
    <property type="project" value="UniProtKB-KW"/>
</dbReference>
<dbReference type="GO" id="GO:0016887">
    <property type="term" value="F:ATP hydrolysis activity"/>
    <property type="evidence" value="ECO:0007669"/>
    <property type="project" value="InterPro"/>
</dbReference>
<dbReference type="GO" id="GO:0015562">
    <property type="term" value="F:efflux transmembrane transporter activity"/>
    <property type="evidence" value="ECO:0007669"/>
    <property type="project" value="Ensembl"/>
</dbReference>
<dbReference type="GO" id="GO:0030154">
    <property type="term" value="P:cell differentiation"/>
    <property type="evidence" value="ECO:0007669"/>
    <property type="project" value="UniProtKB-KW"/>
</dbReference>
<dbReference type="GO" id="GO:0001654">
    <property type="term" value="P:eye development"/>
    <property type="evidence" value="ECO:0000315"/>
    <property type="project" value="UniProtKB"/>
</dbReference>
<dbReference type="GO" id="GO:0042391">
    <property type="term" value="P:regulation of membrane potential"/>
    <property type="evidence" value="ECO:0007669"/>
    <property type="project" value="Ensembl"/>
</dbReference>
<dbReference type="CDD" id="cd18577">
    <property type="entry name" value="ABC_6TM_Pgp_ABCB1_D1_like"/>
    <property type="match status" value="1"/>
</dbReference>
<dbReference type="CDD" id="cd18578">
    <property type="entry name" value="ABC_6TM_Pgp_ABCB1_D2_like"/>
    <property type="match status" value="1"/>
</dbReference>
<dbReference type="CDD" id="cd03249">
    <property type="entry name" value="ABC_MTABC3_MDL1_MDL2"/>
    <property type="match status" value="2"/>
</dbReference>
<dbReference type="FunFam" id="1.20.1560.10:FF:000499">
    <property type="entry name" value="ATP-binding cassette sub-family B member 5"/>
    <property type="match status" value="1"/>
</dbReference>
<dbReference type="FunFam" id="1.20.1560.10:FF:000018">
    <property type="entry name" value="ATP-binding cassette subfamily B member 11"/>
    <property type="match status" value="1"/>
</dbReference>
<dbReference type="FunFam" id="1.20.1560.10:FF:000046">
    <property type="entry name" value="ATP-binding cassette subfamily B member 11"/>
    <property type="match status" value="1"/>
</dbReference>
<dbReference type="FunFam" id="3.40.50.300:FF:000302">
    <property type="entry name" value="ATP-binding cassette subfamily B member 5"/>
    <property type="match status" value="1"/>
</dbReference>
<dbReference type="FunFam" id="3.40.50.300:FF:000479">
    <property type="entry name" value="Multidrug resistance protein 1A"/>
    <property type="match status" value="1"/>
</dbReference>
<dbReference type="Gene3D" id="1.20.1560.10">
    <property type="entry name" value="ABC transporter type 1, transmembrane domain"/>
    <property type="match status" value="1"/>
</dbReference>
<dbReference type="Gene3D" id="3.40.50.300">
    <property type="entry name" value="P-loop containing nucleotide triphosphate hydrolases"/>
    <property type="match status" value="2"/>
</dbReference>
<dbReference type="InterPro" id="IPR003593">
    <property type="entry name" value="AAA+_ATPase"/>
</dbReference>
<dbReference type="InterPro" id="IPR011527">
    <property type="entry name" value="ABC1_TM_dom"/>
</dbReference>
<dbReference type="InterPro" id="IPR036640">
    <property type="entry name" value="ABC1_TM_sf"/>
</dbReference>
<dbReference type="InterPro" id="IPR003439">
    <property type="entry name" value="ABC_transporter-like_ATP-bd"/>
</dbReference>
<dbReference type="InterPro" id="IPR017871">
    <property type="entry name" value="ABC_transporter-like_CS"/>
</dbReference>
<dbReference type="InterPro" id="IPR027417">
    <property type="entry name" value="P-loop_NTPase"/>
</dbReference>
<dbReference type="InterPro" id="IPR039421">
    <property type="entry name" value="Type_1_exporter"/>
</dbReference>
<dbReference type="PANTHER" id="PTHR43394">
    <property type="entry name" value="ATP-DEPENDENT PERMEASE MDL1, MITOCHONDRIAL"/>
    <property type="match status" value="1"/>
</dbReference>
<dbReference type="PANTHER" id="PTHR43394:SF27">
    <property type="entry name" value="ATP-DEPENDENT TRANSLOCASE ABCB1-LIKE"/>
    <property type="match status" value="1"/>
</dbReference>
<dbReference type="Pfam" id="PF00664">
    <property type="entry name" value="ABC_membrane"/>
    <property type="match status" value="2"/>
</dbReference>
<dbReference type="Pfam" id="PF00005">
    <property type="entry name" value="ABC_tran"/>
    <property type="match status" value="2"/>
</dbReference>
<dbReference type="SMART" id="SM00382">
    <property type="entry name" value="AAA"/>
    <property type="match status" value="2"/>
</dbReference>
<dbReference type="SUPFAM" id="SSF90123">
    <property type="entry name" value="ABC transporter transmembrane region"/>
    <property type="match status" value="2"/>
</dbReference>
<dbReference type="SUPFAM" id="SSF52540">
    <property type="entry name" value="P-loop containing nucleoside triphosphate hydrolases"/>
    <property type="match status" value="2"/>
</dbReference>
<dbReference type="PROSITE" id="PS50929">
    <property type="entry name" value="ABC_TM1F"/>
    <property type="match status" value="2"/>
</dbReference>
<dbReference type="PROSITE" id="PS00211">
    <property type="entry name" value="ABC_TRANSPORTER_1"/>
    <property type="match status" value="2"/>
</dbReference>
<dbReference type="PROSITE" id="PS50893">
    <property type="entry name" value="ABC_TRANSPORTER_2"/>
    <property type="match status" value="2"/>
</dbReference>
<proteinExistence type="evidence at transcript level"/>